<gene>
    <name type="primary">TET8</name>
    <name type="ordered locus">At2g23810</name>
    <name type="ORF">F27L4.1</name>
</gene>
<organism>
    <name type="scientific">Arabidopsis thaliana</name>
    <name type="common">Mouse-ear cress</name>
    <dbReference type="NCBI Taxonomy" id="3702"/>
    <lineage>
        <taxon>Eukaryota</taxon>
        <taxon>Viridiplantae</taxon>
        <taxon>Streptophyta</taxon>
        <taxon>Embryophyta</taxon>
        <taxon>Tracheophyta</taxon>
        <taxon>Spermatophyta</taxon>
        <taxon>Magnoliopsida</taxon>
        <taxon>eudicotyledons</taxon>
        <taxon>Gunneridae</taxon>
        <taxon>Pentapetalae</taxon>
        <taxon>rosids</taxon>
        <taxon>malvids</taxon>
        <taxon>Brassicales</taxon>
        <taxon>Brassicaceae</taxon>
        <taxon>Camelineae</taxon>
        <taxon>Arabidopsis</taxon>
    </lineage>
</organism>
<accession>Q8S8Q6</accession>
<accession>O64822</accession>
<accession>Q683G1</accession>
<accession>Q8S8N8</accession>
<keyword id="KW-0325">Glycoprotein</keyword>
<keyword id="KW-0472">Membrane</keyword>
<keyword id="KW-1185">Reference proteome</keyword>
<keyword id="KW-0812">Transmembrane</keyword>
<keyword id="KW-1133">Transmembrane helix</keyword>
<evidence type="ECO:0000250" key="1"/>
<evidence type="ECO:0000255" key="2"/>
<evidence type="ECO:0000305" key="3"/>
<comment type="function">
    <text evidence="1">May be involved in the regulation of cell differentiation.</text>
</comment>
<comment type="subcellular location">
    <subcellularLocation>
        <location evidence="1">Membrane</location>
        <topology evidence="3">Multi-pass membrane protein</topology>
    </subcellularLocation>
</comment>
<comment type="similarity">
    <text evidence="3">Belongs to the tetraspanin (TM4SF) family.</text>
</comment>
<comment type="sequence caution" evidence="3">
    <conflict type="erroneous gene model prediction">
        <sequence resource="EMBL-CDS" id="AAF18611"/>
    </conflict>
</comment>
<feature type="chain" id="PRO_0000421048" description="Tetraspanin-8">
    <location>
        <begin position="1"/>
        <end position="273"/>
    </location>
</feature>
<feature type="topological domain" description="Cytoplasmic" evidence="2">
    <location>
        <begin position="1"/>
        <end position="7"/>
    </location>
</feature>
<feature type="transmembrane region" description="Helical" evidence="2">
    <location>
        <begin position="8"/>
        <end position="28"/>
    </location>
</feature>
<feature type="topological domain" description="Extracellular" evidence="2">
    <location>
        <begin position="29"/>
        <end position="45"/>
    </location>
</feature>
<feature type="transmembrane region" description="Helical" evidence="2">
    <location>
        <begin position="46"/>
        <end position="66"/>
    </location>
</feature>
<feature type="topological domain" description="Cytoplasmic" evidence="2">
    <location>
        <begin position="67"/>
        <end position="75"/>
    </location>
</feature>
<feature type="transmembrane region" description="Helical" evidence="2">
    <location>
        <begin position="76"/>
        <end position="96"/>
    </location>
</feature>
<feature type="topological domain" description="Extracellular" evidence="2">
    <location>
        <begin position="97"/>
        <end position="235"/>
    </location>
</feature>
<feature type="transmembrane region" description="Helical" evidence="2">
    <location>
        <begin position="236"/>
        <end position="256"/>
    </location>
</feature>
<feature type="topological domain" description="Cytoplasmic" evidence="2">
    <location>
        <begin position="257"/>
        <end position="273"/>
    </location>
</feature>
<feature type="glycosylation site" description="N-linked (GlcNAc...) asparagine" evidence="2">
    <location>
        <position position="192"/>
    </location>
</feature>
<feature type="sequence conflict" description="In Ref. 3; BAD42919." evidence="3" ref="3">
    <original>I</original>
    <variation>V</variation>
    <location>
        <position position="62"/>
    </location>
</feature>
<sequence>MARCSNNLVGILNFLVFLLSIPILAGGIWLSQKGSTECERFLDKPVIALGVFLMVVAIAGLIGSCCRVTWLLWVYLFVMFLLILLVFCITVFAFVVTNKGAGEAIEGKGYKEYKLGDYSTWLQKRVENGKNWNKIRSCLVESKVCSKLEAKFVNVPVNSFYKEHLTALQSGCCKPSDECGFEYVNPTTWTKNTTGTHTNPDCQTWDNAKEKLCFDCQSCKAGLLDNVKSAWKKVAIVNIVFLVFLIIVYSVGCCAFRNNKRDDSYSRTYGYKP</sequence>
<dbReference type="EMBL" id="AC004482">
    <property type="protein sequence ID" value="AAM14957.1"/>
    <property type="molecule type" value="Genomic_DNA"/>
</dbReference>
<dbReference type="EMBL" id="AC005170">
    <property type="protein sequence ID" value="AAF18611.2"/>
    <property type="status" value="ALT_SEQ"/>
    <property type="molecule type" value="Genomic_DNA"/>
</dbReference>
<dbReference type="EMBL" id="CP002685">
    <property type="protein sequence ID" value="AEC07493.1"/>
    <property type="molecule type" value="Genomic_DNA"/>
</dbReference>
<dbReference type="EMBL" id="AK175156">
    <property type="protein sequence ID" value="BAD42919.1"/>
    <property type="molecule type" value="mRNA"/>
</dbReference>
<dbReference type="EMBL" id="AF325069">
    <property type="protein sequence ID" value="AAK17137.1"/>
    <property type="molecule type" value="mRNA"/>
</dbReference>
<dbReference type="EMBL" id="BT010635">
    <property type="protein sequence ID" value="AAQ89657.1"/>
    <property type="molecule type" value="mRNA"/>
</dbReference>
<dbReference type="PIR" id="T02338">
    <property type="entry name" value="T02338"/>
</dbReference>
<dbReference type="RefSeq" id="NP_850045.2">
    <property type="nucleotide sequence ID" value="NM_179714.5"/>
</dbReference>
<dbReference type="FunCoup" id="Q8S8Q6">
    <property type="interactions" value="351"/>
</dbReference>
<dbReference type="STRING" id="3702.Q8S8Q6"/>
<dbReference type="GlyCosmos" id="Q8S8Q6">
    <property type="glycosylation" value="1 site, No reported glycans"/>
</dbReference>
<dbReference type="GlyGen" id="Q8S8Q6">
    <property type="glycosylation" value="1 site"/>
</dbReference>
<dbReference type="SwissPalm" id="Q8S8Q6"/>
<dbReference type="PaxDb" id="3702-AT2G23810.1"/>
<dbReference type="ProteomicsDB" id="232825"/>
<dbReference type="EnsemblPlants" id="AT2G23810.1">
    <property type="protein sequence ID" value="AT2G23810.1"/>
    <property type="gene ID" value="AT2G23810"/>
</dbReference>
<dbReference type="GeneID" id="816913"/>
<dbReference type="Gramene" id="AT2G23810.1">
    <property type="protein sequence ID" value="AT2G23810.1"/>
    <property type="gene ID" value="AT2G23810"/>
</dbReference>
<dbReference type="KEGG" id="ath:AT2G23810"/>
<dbReference type="Araport" id="AT2G23810"/>
<dbReference type="TAIR" id="AT2G23810">
    <property type="gene designation" value="TET8"/>
</dbReference>
<dbReference type="eggNOG" id="ENOG502QQQH">
    <property type="taxonomic scope" value="Eukaryota"/>
</dbReference>
<dbReference type="HOGENOM" id="CLU_066970_0_0_1"/>
<dbReference type="InParanoid" id="Q8S8Q6"/>
<dbReference type="OMA" id="RRDNAYH"/>
<dbReference type="OrthoDB" id="1892640at2759"/>
<dbReference type="PhylomeDB" id="Q8S8Q6"/>
<dbReference type="PRO" id="PR:Q8S8Q6"/>
<dbReference type="Proteomes" id="UP000006548">
    <property type="component" value="Chromosome 2"/>
</dbReference>
<dbReference type="ExpressionAtlas" id="Q8S8Q6">
    <property type="expression patterns" value="baseline and differential"/>
</dbReference>
<dbReference type="GO" id="GO:0005794">
    <property type="term" value="C:Golgi apparatus"/>
    <property type="evidence" value="ECO:0007005"/>
    <property type="project" value="TAIR"/>
</dbReference>
<dbReference type="GO" id="GO:0005886">
    <property type="term" value="C:plasma membrane"/>
    <property type="evidence" value="ECO:0007005"/>
    <property type="project" value="TAIR"/>
</dbReference>
<dbReference type="GO" id="GO:0009506">
    <property type="term" value="C:plasmodesma"/>
    <property type="evidence" value="ECO:0007005"/>
    <property type="project" value="TAIR"/>
</dbReference>
<dbReference type="GO" id="GO:0005773">
    <property type="term" value="C:vacuole"/>
    <property type="evidence" value="ECO:0007005"/>
    <property type="project" value="TAIR"/>
</dbReference>
<dbReference type="GO" id="GO:0009734">
    <property type="term" value="P:auxin-activated signaling pathway"/>
    <property type="evidence" value="ECO:0007669"/>
    <property type="project" value="InterPro"/>
</dbReference>
<dbReference type="GO" id="GO:0050829">
    <property type="term" value="P:defense response to Gram-negative bacterium"/>
    <property type="evidence" value="ECO:0000270"/>
    <property type="project" value="TAIR"/>
</dbReference>
<dbReference type="InterPro" id="IPR044991">
    <property type="entry name" value="TET_plant"/>
</dbReference>
<dbReference type="InterPro" id="IPR018499">
    <property type="entry name" value="Tetraspanin/Peripherin"/>
</dbReference>
<dbReference type="InterPro" id="IPR018503">
    <property type="entry name" value="Tetraspanin_CS"/>
</dbReference>
<dbReference type="PANTHER" id="PTHR32191">
    <property type="entry name" value="TETRASPANIN-8-RELATED"/>
    <property type="match status" value="1"/>
</dbReference>
<dbReference type="Pfam" id="PF00335">
    <property type="entry name" value="Tetraspanin"/>
    <property type="match status" value="1"/>
</dbReference>
<dbReference type="PRINTS" id="PR00259">
    <property type="entry name" value="TMFOUR"/>
</dbReference>
<dbReference type="PROSITE" id="PS00421">
    <property type="entry name" value="TM4_1"/>
    <property type="match status" value="1"/>
</dbReference>
<protein>
    <recommendedName>
        <fullName>Tetraspanin-8</fullName>
    </recommendedName>
</protein>
<proteinExistence type="evidence at transcript level"/>
<name>TET8_ARATH</name>
<reference key="1">
    <citation type="journal article" date="1999" name="Nature">
        <title>Sequence and analysis of chromosome 2 of the plant Arabidopsis thaliana.</title>
        <authorList>
            <person name="Lin X."/>
            <person name="Kaul S."/>
            <person name="Rounsley S.D."/>
            <person name="Shea T.P."/>
            <person name="Benito M.-I."/>
            <person name="Town C.D."/>
            <person name="Fujii C.Y."/>
            <person name="Mason T.M."/>
            <person name="Bowman C.L."/>
            <person name="Barnstead M.E."/>
            <person name="Feldblyum T.V."/>
            <person name="Buell C.R."/>
            <person name="Ketchum K.A."/>
            <person name="Lee J.J."/>
            <person name="Ronning C.M."/>
            <person name="Koo H.L."/>
            <person name="Moffat K.S."/>
            <person name="Cronin L.A."/>
            <person name="Shen M."/>
            <person name="Pai G."/>
            <person name="Van Aken S."/>
            <person name="Umayam L."/>
            <person name="Tallon L.J."/>
            <person name="Gill J.E."/>
            <person name="Adams M.D."/>
            <person name="Carrera A.J."/>
            <person name="Creasy T.H."/>
            <person name="Goodman H.M."/>
            <person name="Somerville C.R."/>
            <person name="Copenhaver G.P."/>
            <person name="Preuss D."/>
            <person name="Nierman W.C."/>
            <person name="White O."/>
            <person name="Eisen J.A."/>
            <person name="Salzberg S.L."/>
            <person name="Fraser C.M."/>
            <person name="Venter J.C."/>
        </authorList>
    </citation>
    <scope>NUCLEOTIDE SEQUENCE [LARGE SCALE GENOMIC DNA]</scope>
    <source>
        <strain>cv. Columbia</strain>
    </source>
</reference>
<reference key="2">
    <citation type="journal article" date="2017" name="Plant J.">
        <title>Araport11: a complete reannotation of the Arabidopsis thaliana reference genome.</title>
        <authorList>
            <person name="Cheng C.Y."/>
            <person name="Krishnakumar V."/>
            <person name="Chan A.P."/>
            <person name="Thibaud-Nissen F."/>
            <person name="Schobel S."/>
            <person name="Town C.D."/>
        </authorList>
    </citation>
    <scope>GENOME REANNOTATION</scope>
    <source>
        <strain>cv. Columbia</strain>
    </source>
</reference>
<reference key="3">
    <citation type="submission" date="2004-09" db="EMBL/GenBank/DDBJ databases">
        <title>Large-scale analysis of RIKEN Arabidopsis full-length (RAFL) cDNAs.</title>
        <authorList>
            <person name="Totoki Y."/>
            <person name="Seki M."/>
            <person name="Ishida J."/>
            <person name="Nakajima M."/>
            <person name="Enju A."/>
            <person name="Kamiya A."/>
            <person name="Narusaka M."/>
            <person name="Shin-i T."/>
            <person name="Nakagawa M."/>
            <person name="Sakamoto N."/>
            <person name="Oishi K."/>
            <person name="Kohara Y."/>
            <person name="Kobayashi M."/>
            <person name="Toyoda A."/>
            <person name="Sakaki Y."/>
            <person name="Sakurai T."/>
            <person name="Iida K."/>
            <person name="Akiyama K."/>
            <person name="Satou M."/>
            <person name="Toyoda T."/>
            <person name="Konagaya A."/>
            <person name="Carninci P."/>
            <person name="Kawai J."/>
            <person name="Hayashizaki Y."/>
            <person name="Shinozaki K."/>
        </authorList>
    </citation>
    <scope>NUCLEOTIDE SEQUENCE [LARGE SCALE MRNA]</scope>
    <source>
        <strain>cv. Columbia</strain>
    </source>
</reference>
<reference key="4">
    <citation type="submission" date="2000-11" db="EMBL/GenBank/DDBJ databases">
        <authorList>
            <person name="Southwick A."/>
            <person name="Karlin-Neumann G."/>
            <person name="Nguyen M."/>
            <person name="Lam B."/>
            <person name="Miranda M."/>
            <person name="Palm C.J."/>
            <person name="Theologis A."/>
            <person name="Ecker J."/>
            <person name="Davis R.W."/>
        </authorList>
    </citation>
    <scope>NUCLEOTIDE SEQUENCE [LARGE SCALE MRNA] OF 79-273</scope>
    <source>
        <strain>cv. Columbia</strain>
    </source>
</reference>
<reference key="5">
    <citation type="submission" date="2003-10" db="EMBL/GenBank/DDBJ databases">
        <title>Arabidopsis ORF clones.</title>
        <authorList>
            <person name="Cheuk R.F."/>
            <person name="Chen H."/>
            <person name="Kim C.J."/>
            <person name="Shinn P."/>
            <person name="Carninci P."/>
            <person name="Hayashizaki Y."/>
            <person name="Ishida J."/>
            <person name="Kamiya A."/>
            <person name="Kawai J."/>
            <person name="Narusaka M."/>
            <person name="Sakurai T."/>
            <person name="Satou M."/>
            <person name="Seki M."/>
            <person name="Shinozaki K."/>
            <person name="Ecker J.R."/>
        </authorList>
    </citation>
    <scope>NUCLEOTIDE SEQUENCE [LARGE SCALE MRNA] OF 79-273</scope>
    <source>
        <strain>cv. Columbia</strain>
    </source>
</reference>